<protein>
    <recommendedName>
        <fullName>Mugineic-acid 3-dioxygenase</fullName>
        <ecNumber>1.14.11.25</ecNumber>
    </recommendedName>
    <alternativeName>
        <fullName>Protein iron deficiency-specific 2</fullName>
    </alternativeName>
</protein>
<comment type="function">
    <text evidence="3 5">Involved in the biosynthesis of mugineic acid family of phytosiderophores. Hydroxylates the C-3 positions of mugineic acid (MA) and 2'-deoxymugineic acid (DMA). May be involved in boron tolerance.</text>
</comment>
<comment type="catalytic activity">
    <reaction>
        <text>mugineate + 2-oxoglutarate + O2 = 3-epihydroxymugineate + succinate + CO2 + H(+)</text>
        <dbReference type="Rhea" id="RHEA:14509"/>
        <dbReference type="ChEBI" id="CHEBI:15378"/>
        <dbReference type="ChEBI" id="CHEBI:15379"/>
        <dbReference type="ChEBI" id="CHEBI:16526"/>
        <dbReference type="ChEBI" id="CHEBI:16810"/>
        <dbReference type="ChEBI" id="CHEBI:30031"/>
        <dbReference type="ChEBI" id="CHEBI:58488"/>
        <dbReference type="ChEBI" id="CHEBI:77826"/>
        <dbReference type="EC" id="1.14.11.25"/>
    </reaction>
</comment>
<comment type="catalytic activity">
    <reaction>
        <text>2'-deoxymugineate + 2-oxoglutarate + O2 = 3-epihydroxy-2'-deoxymugineate + succinate + CO2 + H(+)</text>
        <dbReference type="Rhea" id="RHEA:20065"/>
        <dbReference type="ChEBI" id="CHEBI:15378"/>
        <dbReference type="ChEBI" id="CHEBI:15379"/>
        <dbReference type="ChEBI" id="CHEBI:16526"/>
        <dbReference type="ChEBI" id="CHEBI:16810"/>
        <dbReference type="ChEBI" id="CHEBI:30031"/>
        <dbReference type="ChEBI" id="CHEBI:58487"/>
        <dbReference type="ChEBI" id="CHEBI:58684"/>
        <dbReference type="EC" id="1.14.11.25"/>
    </reaction>
</comment>
<comment type="cofactor">
    <cofactor evidence="2">
        <name>Fe(2+)</name>
        <dbReference type="ChEBI" id="CHEBI:29033"/>
    </cofactor>
    <text evidence="2">Binds 1 Fe(2+) ion per subunit.</text>
</comment>
<comment type="cofactor">
    <cofactor evidence="1">
        <name>L-ascorbate</name>
        <dbReference type="ChEBI" id="CHEBI:38290"/>
    </cofactor>
</comment>
<comment type="tissue specificity">
    <text evidence="4 6">Expressed in roots, but not in leaves.</text>
</comment>
<comment type="induction">
    <text evidence="4 6">Up-regulated by manganese and zinc deficiency or by excess NaCl. Down-regulated by iron.</text>
</comment>
<comment type="similarity">
    <text evidence="7">Belongs to the iron/ascorbate-dependent oxidoreductase family.</text>
</comment>
<dbReference type="EC" id="1.14.11.25"/>
<dbReference type="EMBL" id="D15051">
    <property type="protein sequence ID" value="BAA03647.1"/>
    <property type="molecule type" value="Genomic_DNA"/>
</dbReference>
<dbReference type="PIR" id="S47972">
    <property type="entry name" value="S47972"/>
</dbReference>
<dbReference type="SMR" id="Q40061"/>
<dbReference type="KEGG" id="ag:BAA03647"/>
<dbReference type="OMA" id="DIMIAPA"/>
<dbReference type="BioCyc" id="MetaCyc:MONOMER-13971"/>
<dbReference type="GO" id="GO:0031418">
    <property type="term" value="F:L-ascorbic acid binding"/>
    <property type="evidence" value="ECO:0007669"/>
    <property type="project" value="UniProtKB-KW"/>
</dbReference>
<dbReference type="GO" id="GO:0046872">
    <property type="term" value="F:metal ion binding"/>
    <property type="evidence" value="ECO:0007669"/>
    <property type="project" value="UniProtKB-KW"/>
</dbReference>
<dbReference type="GO" id="GO:0033761">
    <property type="term" value="F:mugineic-acid 3-dioxygenase activity"/>
    <property type="evidence" value="ECO:0007669"/>
    <property type="project" value="UniProtKB-EC"/>
</dbReference>
<dbReference type="Gene3D" id="2.60.120.330">
    <property type="entry name" value="B-lactam Antibiotic, Isopenicillin N Synthase, Chain"/>
    <property type="match status" value="1"/>
</dbReference>
<dbReference type="InterPro" id="IPR026992">
    <property type="entry name" value="DIOX_N"/>
</dbReference>
<dbReference type="InterPro" id="IPR044861">
    <property type="entry name" value="IPNS-like_FE2OG_OXY"/>
</dbReference>
<dbReference type="InterPro" id="IPR027443">
    <property type="entry name" value="IPNS-like_sf"/>
</dbReference>
<dbReference type="InterPro" id="IPR005123">
    <property type="entry name" value="Oxoglu/Fe-dep_dioxygenase_dom"/>
</dbReference>
<dbReference type="InterPro" id="IPR050295">
    <property type="entry name" value="Plant_2OG-oxidoreductases"/>
</dbReference>
<dbReference type="PANTHER" id="PTHR47991">
    <property type="entry name" value="OXOGLUTARATE/IRON-DEPENDENT DIOXYGENASE"/>
    <property type="match status" value="1"/>
</dbReference>
<dbReference type="Pfam" id="PF03171">
    <property type="entry name" value="2OG-FeII_Oxy"/>
    <property type="match status" value="1"/>
</dbReference>
<dbReference type="Pfam" id="PF14226">
    <property type="entry name" value="DIOX_N"/>
    <property type="match status" value="1"/>
</dbReference>
<dbReference type="SUPFAM" id="SSF51197">
    <property type="entry name" value="Clavaminate synthase-like"/>
    <property type="match status" value="1"/>
</dbReference>
<dbReference type="PROSITE" id="PS51471">
    <property type="entry name" value="FE2OG_OXY"/>
    <property type="match status" value="1"/>
</dbReference>
<keyword id="KW-0223">Dioxygenase</keyword>
<keyword id="KW-0408">Iron</keyword>
<keyword id="KW-0479">Metal-binding</keyword>
<keyword id="KW-0560">Oxidoreductase</keyword>
<keyword id="KW-0847">Vitamin C</keyword>
<accession>Q40061</accession>
<sequence>MAKVMNLTPVHASSIPDSFLLPADRLHPATTDVSLPIIDMSRGRDEVRQAILDSGKEYGFIQVVNHGISEPMLHEMYAVCHEFFDMPAEDKAEFFSEDRSERNKLFCGSAFETLGEKYWIDVLELLYPLPSGDTKDWPHKPQMLREVVGNYTSLARGVAMEILRLLCEGLGLRPDFFVGDISGGRVVVDINYYPPSPNPSRTLGLPPHCDRDLMTVLLPGAVPGLEIAYKGGWIKVQPVPNSLVINFGLQLEVVTNGYLKAVEHRAATNFAEPRLSVASFIVPADDCVVGPAEEFVSEDNPPRYRTLTVGEFKRKHNVVNLDSSINQIININNNQKGI</sequence>
<gene>
    <name type="primary">IDS2</name>
</gene>
<reference key="1">
    <citation type="journal article" date="1994" name="Plant Mol. Biol.">
        <title>A dioxygenase gene (Ids2) expressed under iron deficiency conditions in the roots of Hordeum vulgare.</title>
        <authorList>
            <person name="Okumura N."/>
            <person name="Nishizawa N."/>
            <person name="Umehara Y."/>
            <person name="Ohata T."/>
            <person name="Nakanishi H."/>
            <person name="Yamaguchi T."/>
            <person name="Chino M."/>
            <person name="Mori S."/>
        </authorList>
    </citation>
    <scope>NUCLEOTIDE SEQUENCE [GENOMIC DNA]</scope>
    <scope>TISSUE SPECIFICITY</scope>
    <scope>INDUCTION</scope>
    <source>
        <strain>cv. NK 1558</strain>
    </source>
</reference>
<reference key="2">
    <citation type="journal article" date="2000" name="Plant Mol. Biol.">
        <title>Two dioxygenase genes, Ids3 and Ids2, from Hordeum vulgare are involved in the biosynthesis of mugineic acid family phytosiderophores.</title>
        <authorList>
            <person name="Nakanishi H."/>
            <person name="Yamaguchi H."/>
            <person name="Sasakuma T."/>
            <person name="Nishizawa N.K."/>
            <person name="Mori S."/>
        </authorList>
    </citation>
    <scope>FUNCTION</scope>
    <source>
        <strain>cv. Igri</strain>
        <strain>cv. NK 1558</strain>
        <tissue>Root</tissue>
    </source>
</reference>
<reference key="3">
    <citation type="journal article" date="2007" name="Plant Physiol. Biochem.">
        <title>Promoter analysis of iron-deficiency-inducible barley IDS3 gene in Arabidopsis and tobacco plants.</title>
        <authorList>
            <person name="Kobayashi T."/>
            <person name="Yoshihara T."/>
            <person name="Itai R.N."/>
            <person name="Nakanishi H."/>
            <person name="Takahashi M."/>
            <person name="Mori S."/>
            <person name="Nishizawa N.K."/>
        </authorList>
    </citation>
    <scope>TISSUE SPECIFICITY</scope>
    <scope>INDUCTION</scope>
</reference>
<reference key="4">
    <citation type="journal article" date="2007" name="Plant Physiol.">
        <title>Increased abundance of proteins involved in phytosiderophore production in boron-tolerant barley.</title>
        <authorList>
            <person name="Patterson J."/>
            <person name="Ford K."/>
            <person name="Cassin A."/>
            <person name="Natera S."/>
            <person name="Bacic A."/>
        </authorList>
    </citation>
    <scope>FUNCTION</scope>
</reference>
<name>IDS2_HORVU</name>
<organism>
    <name type="scientific">Hordeum vulgare</name>
    <name type="common">Barley</name>
    <dbReference type="NCBI Taxonomy" id="4513"/>
    <lineage>
        <taxon>Eukaryota</taxon>
        <taxon>Viridiplantae</taxon>
        <taxon>Streptophyta</taxon>
        <taxon>Embryophyta</taxon>
        <taxon>Tracheophyta</taxon>
        <taxon>Spermatophyta</taxon>
        <taxon>Magnoliopsida</taxon>
        <taxon>Liliopsida</taxon>
        <taxon>Poales</taxon>
        <taxon>Poaceae</taxon>
        <taxon>BOP clade</taxon>
        <taxon>Pooideae</taxon>
        <taxon>Triticodae</taxon>
        <taxon>Triticeae</taxon>
        <taxon>Hordeinae</taxon>
        <taxon>Hordeum</taxon>
    </lineage>
</organism>
<feature type="chain" id="PRO_0000389552" description="Mugineic-acid 3-dioxygenase">
    <location>
        <begin position="1"/>
        <end position="338"/>
    </location>
</feature>
<feature type="domain" description="Fe2OG dioxygenase" evidence="2">
    <location>
        <begin position="180"/>
        <end position="283"/>
    </location>
</feature>
<feature type="binding site" evidence="2">
    <location>
        <position position="208"/>
    </location>
    <ligand>
        <name>Fe cation</name>
        <dbReference type="ChEBI" id="CHEBI:24875"/>
    </ligand>
</feature>
<feature type="binding site" evidence="2">
    <location>
        <position position="210"/>
    </location>
    <ligand>
        <name>Fe cation</name>
        <dbReference type="ChEBI" id="CHEBI:24875"/>
    </ligand>
</feature>
<feature type="binding site" evidence="2">
    <location>
        <position position="264"/>
    </location>
    <ligand>
        <name>Fe cation</name>
        <dbReference type="ChEBI" id="CHEBI:24875"/>
    </ligand>
</feature>
<feature type="binding site" evidence="2">
    <location>
        <position position="274"/>
    </location>
    <ligand>
        <name>2-oxoglutarate</name>
        <dbReference type="ChEBI" id="CHEBI:16810"/>
    </ligand>
</feature>
<proteinExistence type="evidence at transcript level"/>
<evidence type="ECO:0000250" key="1"/>
<evidence type="ECO:0000255" key="2">
    <source>
        <dbReference type="PROSITE-ProRule" id="PRU00805"/>
    </source>
</evidence>
<evidence type="ECO:0000269" key="3">
    <source>
    </source>
</evidence>
<evidence type="ECO:0000269" key="4">
    <source>
    </source>
</evidence>
<evidence type="ECO:0000269" key="5">
    <source>
    </source>
</evidence>
<evidence type="ECO:0000269" key="6">
    <source>
    </source>
</evidence>
<evidence type="ECO:0000305" key="7"/>